<reference key="1">
    <citation type="submission" date="2007-10" db="EMBL/GenBank/DDBJ databases">
        <title>Complete sequence of Salinispora arenicola CNS-205.</title>
        <authorList>
            <consortium name="US DOE Joint Genome Institute"/>
            <person name="Copeland A."/>
            <person name="Lucas S."/>
            <person name="Lapidus A."/>
            <person name="Barry K."/>
            <person name="Glavina del Rio T."/>
            <person name="Dalin E."/>
            <person name="Tice H."/>
            <person name="Pitluck S."/>
            <person name="Foster B."/>
            <person name="Schmutz J."/>
            <person name="Larimer F."/>
            <person name="Land M."/>
            <person name="Hauser L."/>
            <person name="Kyrpides N."/>
            <person name="Ivanova N."/>
            <person name="Jensen P.R."/>
            <person name="Moore B.S."/>
            <person name="Penn K."/>
            <person name="Jenkins C."/>
            <person name="Udwary D."/>
            <person name="Xiang L."/>
            <person name="Gontang E."/>
            <person name="Richardson P."/>
        </authorList>
    </citation>
    <scope>NUCLEOTIDE SEQUENCE [LARGE SCALE GENOMIC DNA]</scope>
    <source>
        <strain>CNS-205</strain>
    </source>
</reference>
<protein>
    <recommendedName>
        <fullName evidence="1">Large ribosomal subunit protein uL16</fullName>
    </recommendedName>
    <alternativeName>
        <fullName evidence="3">50S ribosomal protein L16</fullName>
    </alternativeName>
</protein>
<keyword id="KW-0687">Ribonucleoprotein</keyword>
<keyword id="KW-0689">Ribosomal protein</keyword>
<keyword id="KW-0694">RNA-binding</keyword>
<keyword id="KW-0699">rRNA-binding</keyword>
<keyword id="KW-0820">tRNA-binding</keyword>
<feature type="chain" id="PRO_0000354607" description="Large ribosomal subunit protein uL16">
    <location>
        <begin position="1"/>
        <end position="141"/>
    </location>
</feature>
<feature type="region of interest" description="Disordered" evidence="2">
    <location>
        <begin position="1"/>
        <end position="27"/>
    </location>
</feature>
<feature type="compositionally biased region" description="Basic residues" evidence="2">
    <location>
        <begin position="1"/>
        <end position="16"/>
    </location>
</feature>
<organism>
    <name type="scientific">Salinispora arenicola (strain CNS-205)</name>
    <dbReference type="NCBI Taxonomy" id="391037"/>
    <lineage>
        <taxon>Bacteria</taxon>
        <taxon>Bacillati</taxon>
        <taxon>Actinomycetota</taxon>
        <taxon>Actinomycetes</taxon>
        <taxon>Micromonosporales</taxon>
        <taxon>Micromonosporaceae</taxon>
        <taxon>Salinispora</taxon>
    </lineage>
</organism>
<sequence length="141" mass="15946">MLMPRKPPKGFRKPHHPDRSGASKGGNRVVFGEFGIQALEPAYVTNRQIESARIAMTRHIKRGGKVWITIFPDQALTKKPAETRMGSGKGSPEWWVANVKPGRVLFEMSFPNEQIAREAMRRAIHKLPMKCRIVTREVGES</sequence>
<gene>
    <name evidence="1" type="primary">rplP</name>
    <name type="ordered locus">Sare_4308</name>
</gene>
<name>RL16_SALAI</name>
<accession>A8M522</accession>
<evidence type="ECO:0000255" key="1">
    <source>
        <dbReference type="HAMAP-Rule" id="MF_01342"/>
    </source>
</evidence>
<evidence type="ECO:0000256" key="2">
    <source>
        <dbReference type="SAM" id="MobiDB-lite"/>
    </source>
</evidence>
<evidence type="ECO:0000305" key="3"/>
<dbReference type="EMBL" id="CP000850">
    <property type="protein sequence ID" value="ABW00090.1"/>
    <property type="molecule type" value="Genomic_DNA"/>
</dbReference>
<dbReference type="SMR" id="A8M522"/>
<dbReference type="STRING" id="391037.Sare_4308"/>
<dbReference type="KEGG" id="saq:Sare_4308"/>
<dbReference type="eggNOG" id="COG0197">
    <property type="taxonomic scope" value="Bacteria"/>
</dbReference>
<dbReference type="HOGENOM" id="CLU_078858_2_1_11"/>
<dbReference type="OrthoDB" id="9802589at2"/>
<dbReference type="GO" id="GO:0022625">
    <property type="term" value="C:cytosolic large ribosomal subunit"/>
    <property type="evidence" value="ECO:0007669"/>
    <property type="project" value="TreeGrafter"/>
</dbReference>
<dbReference type="GO" id="GO:0019843">
    <property type="term" value="F:rRNA binding"/>
    <property type="evidence" value="ECO:0007669"/>
    <property type="project" value="UniProtKB-UniRule"/>
</dbReference>
<dbReference type="GO" id="GO:0003735">
    <property type="term" value="F:structural constituent of ribosome"/>
    <property type="evidence" value="ECO:0007669"/>
    <property type="project" value="InterPro"/>
</dbReference>
<dbReference type="GO" id="GO:0000049">
    <property type="term" value="F:tRNA binding"/>
    <property type="evidence" value="ECO:0007669"/>
    <property type="project" value="UniProtKB-KW"/>
</dbReference>
<dbReference type="GO" id="GO:0006412">
    <property type="term" value="P:translation"/>
    <property type="evidence" value="ECO:0007669"/>
    <property type="project" value="UniProtKB-UniRule"/>
</dbReference>
<dbReference type="CDD" id="cd01433">
    <property type="entry name" value="Ribosomal_L16_L10e"/>
    <property type="match status" value="1"/>
</dbReference>
<dbReference type="FunFam" id="3.90.1170.10:FF:000001">
    <property type="entry name" value="50S ribosomal protein L16"/>
    <property type="match status" value="1"/>
</dbReference>
<dbReference type="Gene3D" id="3.90.1170.10">
    <property type="entry name" value="Ribosomal protein L10e/L16"/>
    <property type="match status" value="1"/>
</dbReference>
<dbReference type="HAMAP" id="MF_01342">
    <property type="entry name" value="Ribosomal_uL16"/>
    <property type="match status" value="1"/>
</dbReference>
<dbReference type="InterPro" id="IPR047873">
    <property type="entry name" value="Ribosomal_uL16"/>
</dbReference>
<dbReference type="InterPro" id="IPR000114">
    <property type="entry name" value="Ribosomal_uL16_bact-type"/>
</dbReference>
<dbReference type="InterPro" id="IPR020798">
    <property type="entry name" value="Ribosomal_uL16_CS"/>
</dbReference>
<dbReference type="InterPro" id="IPR016180">
    <property type="entry name" value="Ribosomal_uL16_dom"/>
</dbReference>
<dbReference type="InterPro" id="IPR036920">
    <property type="entry name" value="Ribosomal_uL16_sf"/>
</dbReference>
<dbReference type="NCBIfam" id="TIGR01164">
    <property type="entry name" value="rplP_bact"/>
    <property type="match status" value="1"/>
</dbReference>
<dbReference type="PANTHER" id="PTHR12220">
    <property type="entry name" value="50S/60S RIBOSOMAL PROTEIN L16"/>
    <property type="match status" value="1"/>
</dbReference>
<dbReference type="PANTHER" id="PTHR12220:SF13">
    <property type="entry name" value="LARGE RIBOSOMAL SUBUNIT PROTEIN UL16M"/>
    <property type="match status" value="1"/>
</dbReference>
<dbReference type="Pfam" id="PF00252">
    <property type="entry name" value="Ribosomal_L16"/>
    <property type="match status" value="1"/>
</dbReference>
<dbReference type="PRINTS" id="PR00060">
    <property type="entry name" value="RIBOSOMALL16"/>
</dbReference>
<dbReference type="SUPFAM" id="SSF54686">
    <property type="entry name" value="Ribosomal protein L16p/L10e"/>
    <property type="match status" value="1"/>
</dbReference>
<dbReference type="PROSITE" id="PS00701">
    <property type="entry name" value="RIBOSOMAL_L16_2"/>
    <property type="match status" value="1"/>
</dbReference>
<proteinExistence type="inferred from homology"/>
<comment type="function">
    <text evidence="1">Binds 23S rRNA and is also seen to make contacts with the A and possibly P site tRNAs.</text>
</comment>
<comment type="subunit">
    <text evidence="1">Part of the 50S ribosomal subunit.</text>
</comment>
<comment type="similarity">
    <text evidence="1">Belongs to the universal ribosomal protein uL16 family.</text>
</comment>